<name>IGF1_HORSE</name>
<protein>
    <recommendedName>
        <fullName evidence="3">Insulin-like growth factor 1</fullName>
    </recommendedName>
    <alternativeName>
        <fullName evidence="6">Insulin-like growth factor I</fullName>
        <shortName evidence="6">IGF-I</shortName>
    </alternativeName>
    <alternativeName>
        <fullName>Somatomedin</fullName>
    </alternativeName>
</protein>
<sequence length="122" mass="13501">MGKISSLPTQLFKCCFCDFLKVKMHIMSSSHLFYLALCLLTFTSSATAGPETLCGAELVDALQFVCGDRGFYFNKPTGYGSSSRRAPQTGIVDECCFRSCDLRRLEMYCAPLKPAKSARSVR</sequence>
<gene>
    <name evidence="3" type="primary">IGF1</name>
    <name evidence="3" type="synonym">IGF-1</name>
</gene>
<comment type="function">
    <text evidence="2 3 4">The insulin-like growth factors, isolated from plasma, are structurally and functionally related to insulin but have a much higher growth-promoting activity. May be a physiological regulator of [1-14C]-2-deoxy-D-glucose (2DG) transport and glycogen synthesis in osteoblasts. Stimulates glucose transport in bone-derived osteoblastic (PyMS) cells and is effective at much lower concentrations than insulin, not only regarding glycogen and DNA synthesis but also with regard to enhancing glucose uptake. May play a role in synapse maturation. Ca(2+)-dependent exocytosis of IGF1 is required for sensory perception of smell in the olfactory bulb. Acts as a ligand for IGF1R. Binds to the alpha subunit of IGF1R, leading to the activation of the intrinsic tyrosine kinase activity which autophosphorylates tyrosine residues in the beta subunit thus initiating a cascade of down-stream signaling events leading to activation of the PI3K-AKT/PKB and the Ras-MAPK pathways. Binds to integrins ITGAV:ITGB3 and ITGA6:ITGB4. Its binding to integrins and subsequent ternary complex formation with integrins and IGFR1 are essential for IGF1 signaling. Induces the phosphorylation and activation of IGFR1, MAPK3/ERK1, MAPK1/ERK2 and AKT1 (By similarity). As part of the MAPK/ERK signaling pathway, acts as a negative regulator of apoptosis in cardiomyocytes via promotion of STUB1/CHIP-mediated ubiquitination and degradation of ICER-type isoforms of CREM (By similarity).</text>
</comment>
<comment type="subunit">
    <text evidence="3">Forms a ternary complex with IGFR1 and ITGAV:ITGB3. Forms a ternary complex with IGFR1 and ITGA6:ITGB4. Forms a ternary complex with IGFBP3 and ALS.</text>
</comment>
<comment type="subcellular location">
    <subcellularLocation>
        <location evidence="2">Secreted</location>
    </subcellularLocation>
</comment>
<comment type="similarity">
    <text evidence="7">Belongs to the insulin family.</text>
</comment>
<accession>P51458</accession>
<reference key="1">
    <citation type="journal article" date="1996" name="Gen. Comp. Endocrinol.">
        <title>Cloning and sequencing of an equine insulin-like growth factor I cDNA and its expression in fetal and adult tissues.</title>
        <authorList>
            <person name="Otte K."/>
            <person name="Rozell B."/>
            <person name="Gessbo A."/>
            <person name="Engstrom W."/>
        </authorList>
    </citation>
    <scope>NUCLEOTIDE SEQUENCE [MRNA]</scope>
    <source>
        <tissue>Liver</tissue>
    </source>
</reference>
<feature type="signal peptide" evidence="5">
    <location>
        <begin position="1"/>
        <end status="unknown"/>
    </location>
</feature>
<feature type="propeptide" id="PRO_0000015657" evidence="1">
    <location>
        <begin status="unknown"/>
        <end position="48"/>
    </location>
</feature>
<feature type="chain" id="PRO_0000015658" description="Insulin-like growth factor 1">
    <location>
        <begin position="49"/>
        <end position="118"/>
    </location>
</feature>
<feature type="propeptide" id="PRO_0000015659" description="E peptide">
    <location>
        <begin position="119"/>
        <end position="122" status="greater than"/>
    </location>
</feature>
<feature type="region of interest" description="B">
    <location>
        <begin position="49"/>
        <end position="77"/>
    </location>
</feature>
<feature type="region of interest" description="C">
    <location>
        <begin position="78"/>
        <end position="89"/>
    </location>
</feature>
<feature type="region of interest" description="A">
    <location>
        <begin position="90"/>
        <end position="110"/>
    </location>
</feature>
<feature type="region of interest" description="D">
    <location>
        <begin position="111"/>
        <end position="118"/>
    </location>
</feature>
<feature type="disulfide bond" evidence="3">
    <location>
        <begin position="54"/>
        <end position="96"/>
    </location>
</feature>
<feature type="disulfide bond" evidence="3">
    <location>
        <begin position="66"/>
        <end position="109"/>
    </location>
</feature>
<feature type="disulfide bond" evidence="3">
    <location>
        <begin position="95"/>
        <end position="100"/>
    </location>
</feature>
<feature type="non-terminal residue">
    <location>
        <position position="122"/>
    </location>
</feature>
<proteinExistence type="evidence at transcript level"/>
<keyword id="KW-1015">Disulfide bond</keyword>
<keyword id="KW-0339">Growth factor</keyword>
<keyword id="KW-1185">Reference proteome</keyword>
<keyword id="KW-0964">Secreted</keyword>
<keyword id="KW-0732">Signal</keyword>
<organism>
    <name type="scientific">Equus caballus</name>
    <name type="common">Horse</name>
    <dbReference type="NCBI Taxonomy" id="9796"/>
    <lineage>
        <taxon>Eukaryota</taxon>
        <taxon>Metazoa</taxon>
        <taxon>Chordata</taxon>
        <taxon>Craniata</taxon>
        <taxon>Vertebrata</taxon>
        <taxon>Euteleostomi</taxon>
        <taxon>Mammalia</taxon>
        <taxon>Eutheria</taxon>
        <taxon>Laurasiatheria</taxon>
        <taxon>Perissodactyla</taxon>
        <taxon>Equidae</taxon>
        <taxon>Equus</taxon>
    </lineage>
</organism>
<dbReference type="EMBL" id="U28070">
    <property type="protein sequence ID" value="AAA68952.1"/>
    <property type="molecule type" value="mRNA"/>
</dbReference>
<dbReference type="SMR" id="P51458"/>
<dbReference type="STRING" id="9796.ENSECAP00000033255"/>
<dbReference type="PaxDb" id="9796-ENSECAP00000033255"/>
<dbReference type="HOGENOM" id="CLU_123939_0_0_1"/>
<dbReference type="InParanoid" id="P51458"/>
<dbReference type="Proteomes" id="UP000002281">
    <property type="component" value="Unplaced"/>
</dbReference>
<dbReference type="GO" id="GO:0035867">
    <property type="term" value="C:alphav-beta3 integrin-IGF-1-IGF1R complex"/>
    <property type="evidence" value="ECO:0000250"/>
    <property type="project" value="UniProtKB"/>
</dbReference>
<dbReference type="GO" id="GO:0070382">
    <property type="term" value="C:exocytic vesicle"/>
    <property type="evidence" value="ECO:0000250"/>
    <property type="project" value="UniProtKB"/>
</dbReference>
<dbReference type="GO" id="GO:0005615">
    <property type="term" value="C:extracellular space"/>
    <property type="evidence" value="ECO:0000318"/>
    <property type="project" value="GO_Central"/>
</dbReference>
<dbReference type="GO" id="GO:0008083">
    <property type="term" value="F:growth factor activity"/>
    <property type="evidence" value="ECO:0007669"/>
    <property type="project" value="UniProtKB-KW"/>
</dbReference>
<dbReference type="GO" id="GO:0005179">
    <property type="term" value="F:hormone activity"/>
    <property type="evidence" value="ECO:0000318"/>
    <property type="project" value="GO_Central"/>
</dbReference>
<dbReference type="GO" id="GO:0005159">
    <property type="term" value="F:insulin-like growth factor receptor binding"/>
    <property type="evidence" value="ECO:0000250"/>
    <property type="project" value="UniProtKB"/>
</dbReference>
<dbReference type="GO" id="GO:0008283">
    <property type="term" value="P:cell population proliferation"/>
    <property type="evidence" value="ECO:0000318"/>
    <property type="project" value="GO_Central"/>
</dbReference>
<dbReference type="GO" id="GO:0048009">
    <property type="term" value="P:insulin-like growth factor receptor signaling pathway"/>
    <property type="evidence" value="ECO:0000250"/>
    <property type="project" value="UniProtKB"/>
</dbReference>
<dbReference type="GO" id="GO:0043066">
    <property type="term" value="P:negative regulation of apoptotic process"/>
    <property type="evidence" value="ECO:0000250"/>
    <property type="project" value="UniProtKB"/>
</dbReference>
<dbReference type="GO" id="GO:0090201">
    <property type="term" value="P:negative regulation of release of cytochrome c from mitochondria"/>
    <property type="evidence" value="ECO:0000250"/>
    <property type="project" value="UniProtKB"/>
</dbReference>
<dbReference type="GO" id="GO:0034392">
    <property type="term" value="P:negative regulation of smooth muscle cell apoptotic process"/>
    <property type="evidence" value="ECO:0000250"/>
    <property type="project" value="UniProtKB"/>
</dbReference>
<dbReference type="GO" id="GO:0008284">
    <property type="term" value="P:positive regulation of cell population proliferation"/>
    <property type="evidence" value="ECO:0000250"/>
    <property type="project" value="UniProtKB"/>
</dbReference>
<dbReference type="GO" id="GO:0046326">
    <property type="term" value="P:positive regulation of D-glucose import"/>
    <property type="evidence" value="ECO:0000250"/>
    <property type="project" value="UniProtKB"/>
</dbReference>
<dbReference type="GO" id="GO:0045725">
    <property type="term" value="P:positive regulation of glycogen biosynthetic process"/>
    <property type="evidence" value="ECO:0000250"/>
    <property type="project" value="UniProtKB"/>
</dbReference>
<dbReference type="GO" id="GO:0043410">
    <property type="term" value="P:positive regulation of MAPK cascade"/>
    <property type="evidence" value="ECO:0000250"/>
    <property type="project" value="UniProtKB"/>
</dbReference>
<dbReference type="GO" id="GO:0051897">
    <property type="term" value="P:positive regulation of phosphatidylinositol 3-kinase/protein kinase B signal transduction"/>
    <property type="evidence" value="ECO:0000318"/>
    <property type="project" value="GO_Central"/>
</dbReference>
<dbReference type="CDD" id="cd04368">
    <property type="entry name" value="IlGF"/>
    <property type="match status" value="1"/>
</dbReference>
<dbReference type="FunFam" id="1.10.100.10:FF:000001">
    <property type="entry name" value="insulin-like growth factor I isoform X1"/>
    <property type="match status" value="1"/>
</dbReference>
<dbReference type="Gene3D" id="1.10.100.10">
    <property type="entry name" value="Insulin-like"/>
    <property type="match status" value="1"/>
</dbReference>
<dbReference type="InterPro" id="IPR022341">
    <property type="entry name" value="IGF-I"/>
</dbReference>
<dbReference type="InterPro" id="IPR016179">
    <property type="entry name" value="Insulin-like"/>
</dbReference>
<dbReference type="InterPro" id="IPR022350">
    <property type="entry name" value="Insulin-like_growth_factor"/>
</dbReference>
<dbReference type="InterPro" id="IPR036438">
    <property type="entry name" value="Insulin-like_sf"/>
</dbReference>
<dbReference type="InterPro" id="IPR022353">
    <property type="entry name" value="Insulin_CS"/>
</dbReference>
<dbReference type="InterPro" id="IPR022352">
    <property type="entry name" value="Insulin_family"/>
</dbReference>
<dbReference type="PANTHER" id="PTHR46845">
    <property type="entry name" value="INSULIN-LIKE GROWTH FACTOR I"/>
    <property type="match status" value="1"/>
</dbReference>
<dbReference type="PANTHER" id="PTHR46845:SF1">
    <property type="entry name" value="INSULIN-LIKE GROWTH FACTOR I"/>
    <property type="match status" value="1"/>
</dbReference>
<dbReference type="Pfam" id="PF00049">
    <property type="entry name" value="Insulin"/>
    <property type="match status" value="2"/>
</dbReference>
<dbReference type="PRINTS" id="PR02002">
    <property type="entry name" value="INSLNLIKEGF"/>
</dbReference>
<dbReference type="PRINTS" id="PR02005">
    <property type="entry name" value="INSLNLIKEGF1"/>
</dbReference>
<dbReference type="PRINTS" id="PR00276">
    <property type="entry name" value="INSULINFAMLY"/>
</dbReference>
<dbReference type="SMART" id="SM00078">
    <property type="entry name" value="IlGF"/>
    <property type="match status" value="1"/>
</dbReference>
<dbReference type="SUPFAM" id="SSF56994">
    <property type="entry name" value="Insulin-like"/>
    <property type="match status" value="1"/>
</dbReference>
<dbReference type="PROSITE" id="PS00262">
    <property type="entry name" value="INSULIN"/>
    <property type="match status" value="1"/>
</dbReference>
<evidence type="ECO:0000250" key="1"/>
<evidence type="ECO:0000250" key="2">
    <source>
        <dbReference type="UniProtKB" id="P05017"/>
    </source>
</evidence>
<evidence type="ECO:0000250" key="3">
    <source>
        <dbReference type="UniProtKB" id="P05019"/>
    </source>
</evidence>
<evidence type="ECO:0000250" key="4">
    <source>
        <dbReference type="UniProtKB" id="P08025"/>
    </source>
</evidence>
<evidence type="ECO:0000255" key="5"/>
<evidence type="ECO:0000303" key="6">
    <source>
    </source>
</evidence>
<evidence type="ECO:0000305" key="7"/>